<name>PSRP_ACIAD</name>
<proteinExistence type="inferred from homology"/>
<accession>Q6F9R8</accession>
<gene>
    <name type="ordered locus">ACIAD2422</name>
</gene>
<keyword id="KW-0418">Kinase</keyword>
<keyword id="KW-0547">Nucleotide-binding</keyword>
<keyword id="KW-0723">Serine/threonine-protein kinase</keyword>
<keyword id="KW-0808">Transferase</keyword>
<protein>
    <recommendedName>
        <fullName evidence="1">Putative phosphoenolpyruvate synthase regulatory protein</fullName>
        <shortName evidence="1">PEP synthase regulatory protein</shortName>
        <shortName evidence="1">PSRP</shortName>
        <ecNumber evidence="1">2.7.11.33</ecNumber>
        <ecNumber evidence="1">2.7.4.28</ecNumber>
    </recommendedName>
    <alternativeName>
        <fullName evidence="1">Pyruvate, water dikinase regulatory protein</fullName>
    </alternativeName>
</protein>
<reference key="1">
    <citation type="journal article" date="2004" name="Nucleic Acids Res.">
        <title>Unique features revealed by the genome sequence of Acinetobacter sp. ADP1, a versatile and naturally transformation competent bacterium.</title>
        <authorList>
            <person name="Barbe V."/>
            <person name="Vallenet D."/>
            <person name="Fonknechten N."/>
            <person name="Kreimeyer A."/>
            <person name="Oztas S."/>
            <person name="Labarre L."/>
            <person name="Cruveiller S."/>
            <person name="Robert C."/>
            <person name="Duprat S."/>
            <person name="Wincker P."/>
            <person name="Ornston L.N."/>
            <person name="Weissenbach J."/>
            <person name="Marliere P."/>
            <person name="Cohen G.N."/>
            <person name="Medigue C."/>
        </authorList>
    </citation>
    <scope>NUCLEOTIDE SEQUENCE [LARGE SCALE GENOMIC DNA]</scope>
    <source>
        <strain>ATCC 33305 / BD413 / ADP1</strain>
    </source>
</reference>
<feature type="chain" id="PRO_0000196619" description="Putative phosphoenolpyruvate synthase regulatory protein">
    <location>
        <begin position="1"/>
        <end position="278"/>
    </location>
</feature>
<feature type="binding site" evidence="1">
    <location>
        <begin position="158"/>
        <end position="165"/>
    </location>
    <ligand>
        <name>ADP</name>
        <dbReference type="ChEBI" id="CHEBI:456216"/>
    </ligand>
</feature>
<sequence length="278" mass="31112">MSEGKLIKRSVFFISDGTAITAETLGHSLLAQFPNVDFDIHIMPYITTEEAAMNIVEEINQCQSRDGTLPLVFDTLVDPNVREIINTSKAVNLDVFEGLISKLEQVLGTPPTTLVGQTHAVTDSEYYKARIDAVHFALDNDDGALTRHYDKADIILIGVSRSGKTPTSIYLSLQFGIRVANYPLTEEDLDDNRLPKVLKEHKNKLFGLMIDAERLVAIRTERKANSRYASYSQCQMELRAVEGIFISEGIPYLNVSEMSIEEISTRILQMTGLKRRIG</sequence>
<comment type="function">
    <text evidence="1">Bifunctional serine/threonine kinase and phosphorylase involved in the regulation of the phosphoenolpyruvate synthase (PEPS) by catalyzing its phosphorylation/dephosphorylation.</text>
</comment>
<comment type="catalytic activity">
    <reaction evidence="1">
        <text>[pyruvate, water dikinase] + ADP = [pyruvate, water dikinase]-phosphate + AMP + H(+)</text>
        <dbReference type="Rhea" id="RHEA:46020"/>
        <dbReference type="Rhea" id="RHEA-COMP:11425"/>
        <dbReference type="Rhea" id="RHEA-COMP:11426"/>
        <dbReference type="ChEBI" id="CHEBI:15378"/>
        <dbReference type="ChEBI" id="CHEBI:43176"/>
        <dbReference type="ChEBI" id="CHEBI:68546"/>
        <dbReference type="ChEBI" id="CHEBI:456215"/>
        <dbReference type="ChEBI" id="CHEBI:456216"/>
        <dbReference type="EC" id="2.7.11.33"/>
    </reaction>
</comment>
<comment type="catalytic activity">
    <reaction evidence="1">
        <text>[pyruvate, water dikinase]-phosphate + phosphate + H(+) = [pyruvate, water dikinase] + diphosphate</text>
        <dbReference type="Rhea" id="RHEA:48580"/>
        <dbReference type="Rhea" id="RHEA-COMP:11425"/>
        <dbReference type="Rhea" id="RHEA-COMP:11426"/>
        <dbReference type="ChEBI" id="CHEBI:15378"/>
        <dbReference type="ChEBI" id="CHEBI:33019"/>
        <dbReference type="ChEBI" id="CHEBI:43176"/>
        <dbReference type="ChEBI" id="CHEBI:43474"/>
        <dbReference type="ChEBI" id="CHEBI:68546"/>
        <dbReference type="EC" id="2.7.4.28"/>
    </reaction>
</comment>
<comment type="similarity">
    <text evidence="1">Belongs to the pyruvate, phosphate/water dikinase regulatory protein family. PSRP subfamily.</text>
</comment>
<dbReference type="EC" id="2.7.11.33" evidence="1"/>
<dbReference type="EC" id="2.7.4.28" evidence="1"/>
<dbReference type="EMBL" id="CR543861">
    <property type="protein sequence ID" value="CAG69195.1"/>
    <property type="molecule type" value="Genomic_DNA"/>
</dbReference>
<dbReference type="RefSeq" id="WP_004928345.1">
    <property type="nucleotide sequence ID" value="NC_005966.1"/>
</dbReference>
<dbReference type="SMR" id="Q6F9R8"/>
<dbReference type="STRING" id="202950.GCA_001485005_01571"/>
<dbReference type="GeneID" id="45234731"/>
<dbReference type="KEGG" id="aci:ACIAD2422"/>
<dbReference type="eggNOG" id="COG1806">
    <property type="taxonomic scope" value="Bacteria"/>
</dbReference>
<dbReference type="HOGENOM" id="CLU_046206_1_0_6"/>
<dbReference type="OrthoDB" id="9782201at2"/>
<dbReference type="BioCyc" id="ASP62977:ACIAD_RS11070-MONOMER"/>
<dbReference type="Proteomes" id="UP000000430">
    <property type="component" value="Chromosome"/>
</dbReference>
<dbReference type="GO" id="GO:0043531">
    <property type="term" value="F:ADP binding"/>
    <property type="evidence" value="ECO:0007669"/>
    <property type="project" value="UniProtKB-UniRule"/>
</dbReference>
<dbReference type="GO" id="GO:0005524">
    <property type="term" value="F:ATP binding"/>
    <property type="evidence" value="ECO:0007669"/>
    <property type="project" value="InterPro"/>
</dbReference>
<dbReference type="GO" id="GO:0016776">
    <property type="term" value="F:phosphotransferase activity, phosphate group as acceptor"/>
    <property type="evidence" value="ECO:0007669"/>
    <property type="project" value="UniProtKB-UniRule"/>
</dbReference>
<dbReference type="GO" id="GO:0004674">
    <property type="term" value="F:protein serine/threonine kinase activity"/>
    <property type="evidence" value="ECO:0007669"/>
    <property type="project" value="UniProtKB-UniRule"/>
</dbReference>
<dbReference type="HAMAP" id="MF_01062">
    <property type="entry name" value="PSRP"/>
    <property type="match status" value="1"/>
</dbReference>
<dbReference type="InterPro" id="IPR005177">
    <property type="entry name" value="Kinase-pyrophosphorylase"/>
</dbReference>
<dbReference type="InterPro" id="IPR026530">
    <property type="entry name" value="PSRP"/>
</dbReference>
<dbReference type="NCBIfam" id="NF003742">
    <property type="entry name" value="PRK05339.1"/>
    <property type="match status" value="1"/>
</dbReference>
<dbReference type="PANTHER" id="PTHR31756">
    <property type="entry name" value="PYRUVATE, PHOSPHATE DIKINASE REGULATORY PROTEIN 1, CHLOROPLASTIC"/>
    <property type="match status" value="1"/>
</dbReference>
<dbReference type="PANTHER" id="PTHR31756:SF3">
    <property type="entry name" value="PYRUVATE, PHOSPHATE DIKINASE REGULATORY PROTEIN 1, CHLOROPLASTIC"/>
    <property type="match status" value="1"/>
</dbReference>
<dbReference type="Pfam" id="PF03618">
    <property type="entry name" value="Kinase-PPPase"/>
    <property type="match status" value="1"/>
</dbReference>
<organism>
    <name type="scientific">Acinetobacter baylyi (strain ATCC 33305 / BD413 / ADP1)</name>
    <dbReference type="NCBI Taxonomy" id="62977"/>
    <lineage>
        <taxon>Bacteria</taxon>
        <taxon>Pseudomonadati</taxon>
        <taxon>Pseudomonadota</taxon>
        <taxon>Gammaproteobacteria</taxon>
        <taxon>Moraxellales</taxon>
        <taxon>Moraxellaceae</taxon>
        <taxon>Acinetobacter</taxon>
    </lineage>
</organism>
<evidence type="ECO:0000255" key="1">
    <source>
        <dbReference type="HAMAP-Rule" id="MF_01062"/>
    </source>
</evidence>